<accession>Q82PZ0</accession>
<sequence>MPTEETEPPVTAFMLVKTTPEWLALTVQERVDAFTTQVLPAIEARTSGVRSRFYDTEFYSARVTDVWVWEAEDHHAYQLLIDALRETPFWDRYFEVVDLLVGTENGYARTYGLEPVATITT</sequence>
<organism>
    <name type="scientific">Streptomyces avermitilis (strain ATCC 31267 / DSM 46492 / JCM 5070 / NBRC 14893 / NCIMB 12804 / NRRL 8165 / MA-4680)</name>
    <dbReference type="NCBI Taxonomy" id="227882"/>
    <lineage>
        <taxon>Bacteria</taxon>
        <taxon>Bacillati</taxon>
        <taxon>Actinomycetota</taxon>
        <taxon>Actinomycetes</taxon>
        <taxon>Kitasatosporales</taxon>
        <taxon>Streptomycetaceae</taxon>
        <taxon>Streptomyces</taxon>
    </lineage>
</organism>
<reference key="1">
    <citation type="journal article" date="2001" name="Proc. Natl. Acad. Sci. U.S.A.">
        <title>Genome sequence of an industrial microorganism Streptomyces avermitilis: deducing the ability of producing secondary metabolites.</title>
        <authorList>
            <person name="Omura S."/>
            <person name="Ikeda H."/>
            <person name="Ishikawa J."/>
            <person name="Hanamoto A."/>
            <person name="Takahashi C."/>
            <person name="Shinose M."/>
            <person name="Takahashi Y."/>
            <person name="Horikawa H."/>
            <person name="Nakazawa H."/>
            <person name="Osonoe T."/>
            <person name="Kikuchi H."/>
            <person name="Shiba T."/>
            <person name="Sakaki Y."/>
            <person name="Hattori M."/>
        </authorList>
    </citation>
    <scope>NUCLEOTIDE SEQUENCE [LARGE SCALE GENOMIC DNA]</scope>
    <source>
        <strain>ATCC 31267 / DSM 46492 / JCM 5070 / NBRC 14893 / NCIMB 12804 / NRRL 8165 / MA-4680</strain>
    </source>
</reference>
<reference key="2">
    <citation type="journal article" date="2003" name="Nat. Biotechnol.">
        <title>Complete genome sequence and comparative analysis of the industrial microorganism Streptomyces avermitilis.</title>
        <authorList>
            <person name="Ikeda H."/>
            <person name="Ishikawa J."/>
            <person name="Hanamoto A."/>
            <person name="Shinose M."/>
            <person name="Kikuchi H."/>
            <person name="Shiba T."/>
            <person name="Sakaki Y."/>
            <person name="Hattori M."/>
            <person name="Omura S."/>
        </authorList>
    </citation>
    <scope>NUCLEOTIDE SEQUENCE [LARGE SCALE GENOMIC DNA]</scope>
    <source>
        <strain>ATCC 31267 / DSM 46492 / JCM 5070 / NBRC 14893 / NCIMB 12804 / NRRL 8165 / MA-4680</strain>
    </source>
</reference>
<name>DARCH_STRAW</name>
<proteinExistence type="inferred from homology"/>
<protein>
    <recommendedName>
        <fullName>Darcynin homolog</fullName>
    </recommendedName>
</protein>
<gene>
    <name type="ordered locus">SAV_731</name>
</gene>
<feature type="chain" id="PRO_0000220204" description="Darcynin homolog">
    <location>
        <begin position="1"/>
        <end position="121"/>
    </location>
</feature>
<comment type="similarity">
    <text evidence="1">Belongs to the darcynin family.</text>
</comment>
<dbReference type="EMBL" id="BA000030">
    <property type="protein sequence ID" value="BAC68441.1"/>
    <property type="molecule type" value="Genomic_DNA"/>
</dbReference>
<dbReference type="RefSeq" id="WP_010982169.1">
    <property type="nucleotide sequence ID" value="NZ_JZJK01000088.1"/>
</dbReference>
<dbReference type="SMR" id="Q82PZ0"/>
<dbReference type="GeneID" id="41537861"/>
<dbReference type="KEGG" id="sma:SAVERM_731"/>
<dbReference type="eggNOG" id="ENOG5031Q68">
    <property type="taxonomic scope" value="Bacteria"/>
</dbReference>
<dbReference type="HOGENOM" id="CLU_165974_0_0_11"/>
<dbReference type="OrthoDB" id="117791at2"/>
<dbReference type="Proteomes" id="UP000000428">
    <property type="component" value="Chromosome"/>
</dbReference>
<dbReference type="InterPro" id="IPR031409">
    <property type="entry name" value="Darcynin"/>
</dbReference>
<dbReference type="Pfam" id="PF17074">
    <property type="entry name" value="Darcynin"/>
    <property type="match status" value="1"/>
</dbReference>
<evidence type="ECO:0000305" key="1"/>
<keyword id="KW-1185">Reference proteome</keyword>